<protein>
    <recommendedName>
        <fullName evidence="1">4-diphosphocytidyl-2-C-methyl-D-erythritol kinase</fullName>
        <shortName evidence="1">CMK</shortName>
        <ecNumber evidence="1">2.7.1.148</ecNumber>
    </recommendedName>
    <alternativeName>
        <fullName evidence="1">4-(cytidine-5'-diphospho)-2-C-methyl-D-erythritol kinase</fullName>
    </alternativeName>
</protein>
<proteinExistence type="inferred from homology"/>
<dbReference type="EC" id="2.7.1.148" evidence="1"/>
<dbReference type="EMBL" id="BX897699">
    <property type="protein sequence ID" value="CAF27230.1"/>
    <property type="molecule type" value="Genomic_DNA"/>
</dbReference>
<dbReference type="RefSeq" id="WP_011180355.1">
    <property type="nucleotide sequence ID" value="NZ_LRIJ02000001.1"/>
</dbReference>
<dbReference type="SMR" id="Q6G4E4"/>
<dbReference type="PaxDb" id="283166-BH04210"/>
<dbReference type="EnsemblBacteria" id="CAF27230">
    <property type="protein sequence ID" value="CAF27230"/>
    <property type="gene ID" value="BH04210"/>
</dbReference>
<dbReference type="KEGG" id="bhe:BH04210"/>
<dbReference type="eggNOG" id="COG1947">
    <property type="taxonomic scope" value="Bacteria"/>
</dbReference>
<dbReference type="OrthoDB" id="9809438at2"/>
<dbReference type="UniPathway" id="UPA00056">
    <property type="reaction ID" value="UER00094"/>
</dbReference>
<dbReference type="Proteomes" id="UP000000421">
    <property type="component" value="Chromosome"/>
</dbReference>
<dbReference type="GO" id="GO:0050515">
    <property type="term" value="F:4-(cytidine 5'-diphospho)-2-C-methyl-D-erythritol kinase activity"/>
    <property type="evidence" value="ECO:0007669"/>
    <property type="project" value="UniProtKB-UniRule"/>
</dbReference>
<dbReference type="GO" id="GO:0005524">
    <property type="term" value="F:ATP binding"/>
    <property type="evidence" value="ECO:0007669"/>
    <property type="project" value="UniProtKB-UniRule"/>
</dbReference>
<dbReference type="GO" id="GO:0019288">
    <property type="term" value="P:isopentenyl diphosphate biosynthetic process, methylerythritol 4-phosphate pathway"/>
    <property type="evidence" value="ECO:0007669"/>
    <property type="project" value="UniProtKB-UniRule"/>
</dbReference>
<dbReference type="GO" id="GO:0016114">
    <property type="term" value="P:terpenoid biosynthetic process"/>
    <property type="evidence" value="ECO:0007669"/>
    <property type="project" value="InterPro"/>
</dbReference>
<dbReference type="Gene3D" id="3.30.230.10">
    <property type="match status" value="1"/>
</dbReference>
<dbReference type="Gene3D" id="3.30.70.890">
    <property type="entry name" value="GHMP kinase, C-terminal domain"/>
    <property type="match status" value="1"/>
</dbReference>
<dbReference type="HAMAP" id="MF_00061">
    <property type="entry name" value="IspE"/>
    <property type="match status" value="1"/>
</dbReference>
<dbReference type="InterPro" id="IPR013750">
    <property type="entry name" value="GHMP_kinase_C_dom"/>
</dbReference>
<dbReference type="InterPro" id="IPR036554">
    <property type="entry name" value="GHMP_kinase_C_sf"/>
</dbReference>
<dbReference type="InterPro" id="IPR006204">
    <property type="entry name" value="GHMP_kinase_N_dom"/>
</dbReference>
<dbReference type="InterPro" id="IPR004424">
    <property type="entry name" value="IspE"/>
</dbReference>
<dbReference type="InterPro" id="IPR020568">
    <property type="entry name" value="Ribosomal_Su5_D2-typ_SF"/>
</dbReference>
<dbReference type="InterPro" id="IPR014721">
    <property type="entry name" value="Ribsml_uS5_D2-typ_fold_subgr"/>
</dbReference>
<dbReference type="NCBIfam" id="TIGR00154">
    <property type="entry name" value="ispE"/>
    <property type="match status" value="1"/>
</dbReference>
<dbReference type="NCBIfam" id="NF011202">
    <property type="entry name" value="PRK14608.1"/>
    <property type="match status" value="1"/>
</dbReference>
<dbReference type="PANTHER" id="PTHR43527">
    <property type="entry name" value="4-DIPHOSPHOCYTIDYL-2-C-METHYL-D-ERYTHRITOL KINASE, CHLOROPLASTIC"/>
    <property type="match status" value="1"/>
</dbReference>
<dbReference type="PANTHER" id="PTHR43527:SF2">
    <property type="entry name" value="4-DIPHOSPHOCYTIDYL-2-C-METHYL-D-ERYTHRITOL KINASE, CHLOROPLASTIC"/>
    <property type="match status" value="1"/>
</dbReference>
<dbReference type="Pfam" id="PF08544">
    <property type="entry name" value="GHMP_kinases_C"/>
    <property type="match status" value="1"/>
</dbReference>
<dbReference type="Pfam" id="PF00288">
    <property type="entry name" value="GHMP_kinases_N"/>
    <property type="match status" value="1"/>
</dbReference>
<dbReference type="PIRSF" id="PIRSF010376">
    <property type="entry name" value="IspE"/>
    <property type="match status" value="1"/>
</dbReference>
<dbReference type="SUPFAM" id="SSF55060">
    <property type="entry name" value="GHMP Kinase, C-terminal domain"/>
    <property type="match status" value="1"/>
</dbReference>
<dbReference type="SUPFAM" id="SSF54211">
    <property type="entry name" value="Ribosomal protein S5 domain 2-like"/>
    <property type="match status" value="1"/>
</dbReference>
<gene>
    <name evidence="1" type="primary">ispE</name>
    <name type="ordered locus">BH04210</name>
</gene>
<comment type="function">
    <text evidence="1">Catalyzes the phosphorylation of the position 2 hydroxy group of 4-diphosphocytidyl-2C-methyl-D-erythritol.</text>
</comment>
<comment type="catalytic activity">
    <reaction evidence="1">
        <text>4-CDP-2-C-methyl-D-erythritol + ATP = 4-CDP-2-C-methyl-D-erythritol 2-phosphate + ADP + H(+)</text>
        <dbReference type="Rhea" id="RHEA:18437"/>
        <dbReference type="ChEBI" id="CHEBI:15378"/>
        <dbReference type="ChEBI" id="CHEBI:30616"/>
        <dbReference type="ChEBI" id="CHEBI:57823"/>
        <dbReference type="ChEBI" id="CHEBI:57919"/>
        <dbReference type="ChEBI" id="CHEBI:456216"/>
        <dbReference type="EC" id="2.7.1.148"/>
    </reaction>
</comment>
<comment type="pathway">
    <text evidence="1">Isoprenoid biosynthesis; isopentenyl diphosphate biosynthesis via DXP pathway; isopentenyl diphosphate from 1-deoxy-D-xylulose 5-phosphate: step 3/6.</text>
</comment>
<comment type="similarity">
    <text evidence="1">Belongs to the GHMP kinase family. IspE subfamily.</text>
</comment>
<organism>
    <name type="scientific">Bartonella henselae (strain ATCC 49882 / DSM 28221 / CCUG 30454 / Houston 1)</name>
    <name type="common">Rochalimaea henselae</name>
    <dbReference type="NCBI Taxonomy" id="283166"/>
    <lineage>
        <taxon>Bacteria</taxon>
        <taxon>Pseudomonadati</taxon>
        <taxon>Pseudomonadota</taxon>
        <taxon>Alphaproteobacteria</taxon>
        <taxon>Hyphomicrobiales</taxon>
        <taxon>Bartonellaceae</taxon>
        <taxon>Bartonella</taxon>
    </lineage>
</organism>
<keyword id="KW-0067">ATP-binding</keyword>
<keyword id="KW-0414">Isoprene biosynthesis</keyword>
<keyword id="KW-0418">Kinase</keyword>
<keyword id="KW-0547">Nucleotide-binding</keyword>
<keyword id="KW-0808">Transferase</keyword>
<name>ISPE_BARHE</name>
<reference key="1">
    <citation type="journal article" date="2004" name="Proc. Natl. Acad. Sci. U.S.A.">
        <title>The louse-borne human pathogen Bartonella quintana is a genomic derivative of the zoonotic agent Bartonella henselae.</title>
        <authorList>
            <person name="Alsmark U.C.M."/>
            <person name="Frank A.C."/>
            <person name="Karlberg E.O."/>
            <person name="Legault B.-A."/>
            <person name="Ardell D.H."/>
            <person name="Canbaeck B."/>
            <person name="Eriksson A.-S."/>
            <person name="Naeslund A.K."/>
            <person name="Handley S.A."/>
            <person name="Huvet M."/>
            <person name="La Scola B."/>
            <person name="Holmberg M."/>
            <person name="Andersson S.G.E."/>
        </authorList>
    </citation>
    <scope>NUCLEOTIDE SEQUENCE [LARGE SCALE GENOMIC DNA]</scope>
    <source>
        <strain>ATCC 49882 / DSM 28221 / CCUG 30454 / Houston 1</strain>
    </source>
</reference>
<sequence length="302" mass="32715">MISNGQAFFQAPSYLFTPIKLNLALHVVGQRADGYHLIESLVYFSLSGDCLSCTPFGSNRFVLTGPFADELVSDAENLVVRAHDFMCNTFPECAKPAFFQLVKLLPVASGVGGGSGNAAGVLSLLRQQWALDCSCEKLAEMSLVLGADVPMCLFALEYQQPLFVKGIGQDITRLKEACSLAMVLVNHGQQIATKTVFKALEKRDHPPLKIDSAALKTVDSLVEALQETRNDLFVPALKIAPQLSEVLCALDESGALFSRMSGTGATCFGIFKDKQAAQQAALFIKAMYPDWFVKPIVTLAKL</sequence>
<feature type="chain" id="PRO_0000235068" description="4-diphosphocytidyl-2-C-methyl-D-erythritol kinase">
    <location>
        <begin position="1"/>
        <end position="302"/>
    </location>
</feature>
<feature type="active site" evidence="1">
    <location>
        <position position="20"/>
    </location>
</feature>
<feature type="active site" evidence="1">
    <location>
        <position position="148"/>
    </location>
</feature>
<feature type="binding site" evidence="1">
    <location>
        <begin position="106"/>
        <end position="116"/>
    </location>
    <ligand>
        <name>ATP</name>
        <dbReference type="ChEBI" id="CHEBI:30616"/>
    </ligand>
</feature>
<evidence type="ECO:0000255" key="1">
    <source>
        <dbReference type="HAMAP-Rule" id="MF_00061"/>
    </source>
</evidence>
<accession>Q6G4E4</accession>